<proteinExistence type="evidence at transcript level"/>
<reference key="1">
    <citation type="journal article" date="1995" name="Proc. Natl. Acad. Sci. U.S.A.">
        <title>Cloning of a sodium channel alpha subunit from rabbit Schwann cells.</title>
        <authorList>
            <person name="Belcher S.M."/>
            <person name="Zerillo C.A."/>
            <person name="Levenson R."/>
            <person name="Ritchie J.M."/>
            <person name="Howe J.R."/>
        </authorList>
    </citation>
    <scope>NUCLEOTIDE SEQUENCE [MRNA] (ISOFORMS 1 AND 2)</scope>
    <scope>TISSUE SPECIFICITY</scope>
    <source>
        <strain>New Zealand white</strain>
        <tissue>Schwann cell</tissue>
    </source>
</reference>
<accession>Q28644</accession>
<name>SCN9A_RABIT</name>
<feature type="chain" id="PRO_0000048504" description="Sodium channel protein type 9 subunit alpha">
    <location>
        <begin position="1"/>
        <end position="1984"/>
    </location>
</feature>
<feature type="topological domain" description="Cytoplasmic" evidence="11">
    <location>
        <begin position="1"/>
        <end position="125"/>
    </location>
</feature>
<feature type="transmembrane region" description="Helical; Name=S1 of repeat I" evidence="4">
    <location>
        <begin position="126"/>
        <end position="145"/>
    </location>
</feature>
<feature type="topological domain" description="Extracellular" evidence="11">
    <location>
        <begin position="146"/>
        <end position="150"/>
    </location>
</feature>
<feature type="transmembrane region" description="Helical; Name=S2 of repeat I" evidence="4">
    <location>
        <begin position="151"/>
        <end position="172"/>
    </location>
</feature>
<feature type="topological domain" description="Cytoplasmic" evidence="11">
    <location>
        <begin position="173"/>
        <end position="185"/>
    </location>
</feature>
<feature type="transmembrane region" description="Helical; Name=S3 of repeat I" evidence="4">
    <location>
        <begin position="186"/>
        <end position="204"/>
    </location>
</feature>
<feature type="topological domain" description="Extracellular" evidence="11">
    <location>
        <begin position="205"/>
        <end position="210"/>
    </location>
</feature>
<feature type="transmembrane region" description="Helical; Name=S4 of repeat I" evidence="4">
    <location>
        <begin position="211"/>
        <end position="227"/>
    </location>
</feature>
<feature type="topological domain" description="Cytoplasmic" evidence="11">
    <location>
        <begin position="228"/>
        <end position="241"/>
    </location>
</feature>
<feature type="transmembrane region" description="Helical; Name=S5 of repeat I" evidence="4">
    <location>
        <begin position="242"/>
        <end position="267"/>
    </location>
</feature>
<feature type="topological domain" description="Extracellular" evidence="11">
    <location>
        <begin position="268"/>
        <end position="344"/>
    </location>
</feature>
<feature type="intramembrane region" description="Pore-forming" evidence="4">
    <location>
        <begin position="345"/>
        <end position="361"/>
    </location>
</feature>
<feature type="topological domain" description="Extracellular" evidence="11">
    <location>
        <begin position="362"/>
        <end position="374"/>
    </location>
</feature>
<feature type="transmembrane region" description="Helical; Name=S6 of repeat I" evidence="4">
    <location>
        <begin position="375"/>
        <end position="400"/>
    </location>
</feature>
<feature type="topological domain" description="Cytoplasmic" evidence="11">
    <location>
        <begin position="401"/>
        <end position="742"/>
    </location>
</feature>
<feature type="transmembrane region" description="Helical; Name=S1 of repeat II" evidence="4">
    <location>
        <begin position="743"/>
        <end position="759"/>
    </location>
</feature>
<feature type="topological domain" description="Extracellular" evidence="11">
    <location>
        <begin position="760"/>
        <end position="768"/>
    </location>
</feature>
<feature type="transmembrane region" description="Helical; Name=S2 of repeat II" evidence="4">
    <location>
        <begin position="769"/>
        <end position="793"/>
    </location>
</feature>
<feature type="topological domain" description="Cytoplasmic" evidence="11">
    <location>
        <begin position="794"/>
        <end position="802"/>
    </location>
</feature>
<feature type="transmembrane region" description="Helical; Name=S3 of repeat II" evidence="4">
    <location>
        <begin position="803"/>
        <end position="819"/>
    </location>
</feature>
<feature type="topological domain" description="Extracellular" evidence="11">
    <location>
        <begin position="820"/>
        <end position="828"/>
    </location>
</feature>
<feature type="transmembrane region" description="Helical; Name=S4 of repeat II" evidence="4">
    <location>
        <begin position="829"/>
        <end position="845"/>
    </location>
</feature>
<feature type="topological domain" description="Cytoplasmic" evidence="11">
    <location>
        <begin position="846"/>
        <end position="862"/>
    </location>
</feature>
<feature type="transmembrane region" description="Helical; Name=S5 of repeat II" evidence="4">
    <location>
        <begin position="863"/>
        <end position="885"/>
    </location>
</feature>
<feature type="topological domain" description="Extracellular" evidence="11">
    <location>
        <begin position="886"/>
        <end position="912"/>
    </location>
</feature>
<feature type="intramembrane region" description="Pore-forming" evidence="4">
    <location>
        <begin position="913"/>
        <end position="925"/>
    </location>
</feature>
<feature type="topological domain" description="Extracellular" evidence="11">
    <location>
        <begin position="926"/>
        <end position="937"/>
    </location>
</feature>
<feature type="transmembrane region" description="Helical; Name=S6 of repeat II" evidence="4">
    <location>
        <begin position="938"/>
        <end position="964"/>
    </location>
</feature>
<feature type="topological domain" description="Cytoplasmic" evidence="11">
    <location>
        <begin position="965"/>
        <end position="1184"/>
    </location>
</feature>
<feature type="transmembrane region" description="Helical; Name=S1 of repeat III" evidence="4">
    <location>
        <begin position="1185"/>
        <end position="1209"/>
    </location>
</feature>
<feature type="topological domain" description="Extracellular" evidence="11">
    <location>
        <begin position="1210"/>
        <end position="1221"/>
    </location>
</feature>
<feature type="transmembrane region" description="Helical; Name=S2 of repeat III" evidence="4">
    <location>
        <begin position="1222"/>
        <end position="1247"/>
    </location>
</feature>
<feature type="topological domain" description="Cytoplasmic" evidence="11">
    <location>
        <begin position="1248"/>
        <end position="1249"/>
    </location>
</feature>
<feature type="transmembrane region" description="Helical; Name=S3 of repeat III" evidence="4">
    <location>
        <begin position="1250"/>
        <end position="1275"/>
    </location>
</feature>
<feature type="topological domain" description="Extracellular" evidence="11">
    <location>
        <begin position="1276"/>
        <end position="1284"/>
    </location>
</feature>
<feature type="transmembrane region" description="Helical; Name=S4 of repeat III" evidence="4">
    <location>
        <begin position="1285"/>
        <end position="1301"/>
    </location>
</feature>
<feature type="topological domain" description="Cytoplasmic" evidence="11">
    <location>
        <begin position="1302"/>
        <end position="1314"/>
    </location>
</feature>
<feature type="transmembrane region" description="Helical; Name=S5 of repeat III" evidence="4">
    <location>
        <begin position="1315"/>
        <end position="1339"/>
    </location>
</feature>
<feature type="topological domain" description="Extracellular" evidence="11">
    <location>
        <begin position="1340"/>
        <end position="1391"/>
    </location>
</feature>
<feature type="intramembrane region" description="Pore-forming" evidence="4">
    <location>
        <begin position="1392"/>
        <end position="1402"/>
    </location>
</feature>
<feature type="topological domain" description="Extracellular" evidence="11">
    <location>
        <begin position="1403"/>
        <end position="1428"/>
    </location>
</feature>
<feature type="transmembrane region" description="Helical; Name=S6 of repeat III" evidence="4">
    <location>
        <begin position="1429"/>
        <end position="1454"/>
    </location>
</feature>
<feature type="topological domain" description="Cytoplasmic" evidence="11">
    <location>
        <begin position="1455"/>
        <end position="1511"/>
    </location>
</feature>
<feature type="transmembrane region" description="Helical; Name=S1 of repeat IV" evidence="4">
    <location>
        <begin position="1512"/>
        <end position="1531"/>
    </location>
</feature>
<feature type="topological domain" description="Extracellular" evidence="11">
    <location>
        <begin position="1532"/>
        <end position="1542"/>
    </location>
</feature>
<feature type="transmembrane region" description="Helical; Name=S2 of repeat IV" evidence="4">
    <location>
        <begin position="1543"/>
        <end position="1564"/>
    </location>
</feature>
<feature type="topological domain" description="Cytoplasmic" evidence="11">
    <location>
        <begin position="1565"/>
        <end position="1573"/>
    </location>
</feature>
<feature type="transmembrane region" description="Helical; Name=S3 of repeat IV" evidence="4">
    <location>
        <begin position="1574"/>
        <end position="1595"/>
    </location>
</feature>
<feature type="topological domain" description="Extracellular" evidence="11">
    <location>
        <begin position="1596"/>
        <end position="1604"/>
    </location>
</feature>
<feature type="transmembrane region" description="Helical; Name=S4 of repeat IV" evidence="4">
    <location>
        <begin position="1605"/>
        <end position="1624"/>
    </location>
</feature>
<feature type="topological domain" description="Cytoplasmic" evidence="11">
    <location>
        <begin position="1625"/>
        <end position="1637"/>
    </location>
</feature>
<feature type="transmembrane region" description="Helical; Name=S5 of repeat IV" evidence="4">
    <location>
        <begin position="1638"/>
        <end position="1660"/>
    </location>
</feature>
<feature type="topological domain" description="Extracellular" evidence="11">
    <location>
        <begin position="1661"/>
        <end position="1683"/>
    </location>
</feature>
<feature type="intramembrane region" description="Pore-forming" evidence="4">
    <location>
        <begin position="1684"/>
        <end position="1696"/>
    </location>
</feature>
<feature type="topological domain" description="Extracellular" evidence="11">
    <location>
        <begin position="1697"/>
        <end position="1730"/>
    </location>
</feature>
<feature type="transmembrane region" description="Helical; Name=S6 of repeat IV" evidence="4">
    <location>
        <begin position="1731"/>
        <end position="1756"/>
    </location>
</feature>
<feature type="topological domain" description="Cytoplasmic" evidence="11">
    <location>
        <begin position="1757"/>
        <end position="1984"/>
    </location>
</feature>
<feature type="repeat" description="I" evidence="11">
    <location>
        <begin position="112"/>
        <end position="408"/>
    </location>
</feature>
<feature type="repeat" description="II" evidence="11">
    <location>
        <begin position="723"/>
        <end position="986"/>
    </location>
</feature>
<feature type="repeat" description="III" evidence="11">
    <location>
        <begin position="1177"/>
        <end position="1485"/>
    </location>
</feature>
<feature type="repeat" description="IV" evidence="11">
    <location>
        <begin position="1494"/>
        <end position="1792"/>
    </location>
</feature>
<feature type="domain" description="IQ" evidence="7">
    <location>
        <begin position="1886"/>
        <end position="1915"/>
    </location>
</feature>
<feature type="region of interest" description="Disordered" evidence="8">
    <location>
        <begin position="26"/>
        <end position="55"/>
    </location>
</feature>
<feature type="region of interest" description="Disordered" evidence="8">
    <location>
        <begin position="459"/>
        <end position="517"/>
    </location>
</feature>
<feature type="region of interest" description="Disordered" evidence="8">
    <location>
        <begin position="563"/>
        <end position="610"/>
    </location>
</feature>
<feature type="region of interest" description="Disordered" evidence="8">
    <location>
        <begin position="1087"/>
        <end position="1146"/>
    </location>
</feature>
<feature type="region of interest" description="Disordered" evidence="8">
    <location>
        <begin position="1924"/>
        <end position="1984"/>
    </location>
</feature>
<feature type="compositionally biased region" description="Basic and acidic residues" evidence="8">
    <location>
        <begin position="26"/>
        <end position="47"/>
    </location>
</feature>
<feature type="compositionally biased region" description="Low complexity" evidence="8">
    <location>
        <begin position="459"/>
        <end position="469"/>
    </location>
</feature>
<feature type="compositionally biased region" description="Basic residues" evidence="8">
    <location>
        <begin position="472"/>
        <end position="484"/>
    </location>
</feature>
<feature type="compositionally biased region" description="Basic and acidic residues" evidence="8">
    <location>
        <begin position="487"/>
        <end position="508"/>
    </location>
</feature>
<feature type="compositionally biased region" description="Basic and acidic residues" evidence="8">
    <location>
        <begin position="571"/>
        <end position="583"/>
    </location>
</feature>
<feature type="compositionally biased region" description="Polar residues" evidence="8">
    <location>
        <begin position="1118"/>
        <end position="1128"/>
    </location>
</feature>
<feature type="compositionally biased region" description="Acidic residues" evidence="8">
    <location>
        <begin position="1134"/>
        <end position="1146"/>
    </location>
</feature>
<feature type="compositionally biased region" description="Polar residues" evidence="8">
    <location>
        <begin position="1933"/>
        <end position="1956"/>
    </location>
</feature>
<feature type="compositionally biased region" description="Basic and acidic residues" evidence="8">
    <location>
        <begin position="1958"/>
        <end position="1984"/>
    </location>
</feature>
<feature type="site" description="Is directly targeted by the spider protoxin-II" evidence="4">
    <location>
        <position position="819"/>
    </location>
</feature>
<feature type="site" description="Is directly targeted by the spider protoxin-II" evidence="4">
    <location>
        <position position="824"/>
    </location>
</feature>
<feature type="modified residue" description="Phosphoserine; by PKC" evidence="4">
    <location>
        <position position="1487"/>
    </location>
</feature>
<feature type="glycosylation site" description="N-linked (GlcNAc...) asparagine" evidence="6">
    <location>
        <position position="209"/>
    </location>
</feature>
<feature type="glycosylation site" description="N-linked (GlcNAc...) asparagine" evidence="6">
    <location>
        <position position="281"/>
    </location>
</feature>
<feature type="glycosylation site" description="N-linked (GlcNAc...) asparagine" evidence="6">
    <location>
        <position position="1349"/>
    </location>
</feature>
<feature type="glycosylation site" description="N-linked (GlcNAc...) asparagine" evidence="6">
    <location>
        <position position="1363"/>
    </location>
</feature>
<feature type="glycosylation site" description="N-linked (GlcNAc...) asparagine" evidence="6">
    <location>
        <position position="1372"/>
    </location>
</feature>
<feature type="disulfide bond" evidence="1">
    <location>
        <begin position="275"/>
        <end position="322"/>
    </location>
</feature>
<feature type="disulfide bond" description="Interchain; with SCN2B or SCN4B" evidence="2">
    <location>
        <position position="892"/>
    </location>
</feature>
<feature type="disulfide bond" description="Interchain; with the conotoxin GVIIJ (when the channel is not linked to SCN2B or SCN4B; the bond to SCN2B or SCN4B protects the channel from the inhibition by toxin)" evidence="2">
    <location>
        <position position="892"/>
    </location>
</feature>
<feature type="disulfide bond" evidence="4">
    <location>
        <begin position="894"/>
        <end position="900"/>
    </location>
</feature>
<feature type="disulfide bond" evidence="1">
    <location>
        <begin position="932"/>
        <end position="941"/>
    </location>
</feature>
<feature type="disulfide bond" evidence="4">
    <location>
        <begin position="1347"/>
        <end position="1367"/>
    </location>
</feature>
<feature type="disulfide bond" evidence="4">
    <location>
        <begin position="1712"/>
        <end position="1727"/>
    </location>
</feature>
<feature type="splice variant" id="VSP_012030" description="In isoform 2." evidence="10">
    <original>YLTEFVNLGNVSALRTFRVLRALKTISVIP</original>
    <variation>YVTEFVDLGNVSALRTFRVLRALKTISVIP</variation>
    <location>
        <begin position="200"/>
        <end position="229"/>
    </location>
</feature>
<gene>
    <name evidence="4" type="primary">SCN9A</name>
</gene>
<protein>
    <recommendedName>
        <fullName evidence="4">Sodium channel protein type 9 subunit alpha</fullName>
    </recommendedName>
    <alternativeName>
        <fullName evidence="10">Nas</fullName>
    </alternativeName>
    <alternativeName>
        <fullName>Schwann cell sodium channel</fullName>
    </alternativeName>
    <alternativeName>
        <fullName>Sodium channel protein type IX subunit alpha</fullName>
    </alternativeName>
    <alternativeName>
        <fullName>Voltage-gated sodium channel subunit alpha Nav1.7</fullName>
    </alternativeName>
</protein>
<organism>
    <name type="scientific">Oryctolagus cuniculus</name>
    <name type="common">Rabbit</name>
    <dbReference type="NCBI Taxonomy" id="9986"/>
    <lineage>
        <taxon>Eukaryota</taxon>
        <taxon>Metazoa</taxon>
        <taxon>Chordata</taxon>
        <taxon>Craniata</taxon>
        <taxon>Vertebrata</taxon>
        <taxon>Euteleostomi</taxon>
        <taxon>Mammalia</taxon>
        <taxon>Eutheria</taxon>
        <taxon>Euarchontoglires</taxon>
        <taxon>Glires</taxon>
        <taxon>Lagomorpha</taxon>
        <taxon>Leporidae</taxon>
        <taxon>Oryctolagus</taxon>
    </lineage>
</organism>
<keyword id="KW-0025">Alternative splicing</keyword>
<keyword id="KW-1003">Cell membrane</keyword>
<keyword id="KW-0966">Cell projection</keyword>
<keyword id="KW-1015">Disulfide bond</keyword>
<keyword id="KW-0325">Glycoprotein</keyword>
<keyword id="KW-0407">Ion channel</keyword>
<keyword id="KW-0406">Ion transport</keyword>
<keyword id="KW-0472">Membrane</keyword>
<keyword id="KW-0597">Phosphoprotein</keyword>
<keyword id="KW-1185">Reference proteome</keyword>
<keyword id="KW-0677">Repeat</keyword>
<keyword id="KW-0915">Sodium</keyword>
<keyword id="KW-0894">Sodium channel</keyword>
<keyword id="KW-0739">Sodium transport</keyword>
<keyword id="KW-0812">Transmembrane</keyword>
<keyword id="KW-1133">Transmembrane helix</keyword>
<keyword id="KW-0813">Transport</keyword>
<keyword id="KW-0832">Ubl conjugation</keyword>
<keyword id="KW-0851">Voltage-gated channel</keyword>
<evidence type="ECO:0000250" key="1">
    <source>
        <dbReference type="UniProtKB" id="D0E0C2"/>
    </source>
</evidence>
<evidence type="ECO:0000250" key="2">
    <source>
        <dbReference type="UniProtKB" id="P04775"/>
    </source>
</evidence>
<evidence type="ECO:0000250" key="3">
    <source>
        <dbReference type="UniProtKB" id="P35499"/>
    </source>
</evidence>
<evidence type="ECO:0000250" key="4">
    <source>
        <dbReference type="UniProtKB" id="Q15858"/>
    </source>
</evidence>
<evidence type="ECO:0000250" key="5">
    <source>
        <dbReference type="UniProtKB" id="Q62205"/>
    </source>
</evidence>
<evidence type="ECO:0000255" key="6"/>
<evidence type="ECO:0000255" key="7">
    <source>
        <dbReference type="PROSITE-ProRule" id="PRU00116"/>
    </source>
</evidence>
<evidence type="ECO:0000256" key="8">
    <source>
        <dbReference type="SAM" id="MobiDB-lite"/>
    </source>
</evidence>
<evidence type="ECO:0000269" key="9">
    <source>
    </source>
</evidence>
<evidence type="ECO:0000303" key="10">
    <source>
    </source>
</evidence>
<evidence type="ECO:0000305" key="11"/>
<sequence>MAMLPPPGPQSFVRFTKQSLALIEQRIAEGKTKEPKEEKKDDHDEGPKPSSDLEAGKQLPFIYGDIPAGMVSEPLEDLDPYYADKKTFIVLNKGKAIFRFNATPALYILSPFSPLRRISIKILVHSLFSMLIMCTILTNCIFMTMNNPAEWTKNVEYTFTGIYTFESLVKIFARGFCVGEFTFLRDPWNWLDFIVIVFAYLTEFVNLGNVSALRTFRVLRALKTISVIPGLKTIVGALIQSVKKLSDVIILTVFCLSVFALIGLQLFMGHLKHKCLRKIENETLESIMSSIESEEDYKKYFYYLEGSKDALLCGFSTDSGQCPEGYYCVKAGRNPDYGYTSFDTFSWAFLALFRLMTQDYWENLYQQTLRAAGKTYMIFFVVVIFLGSFYLINLILAVVAMAYEEQNQANIEEAKQKELEFQQMLDRLKKEQEEAEAIAAAAAEYTSIGRSRIMGLSESSSETSKLSSKSAKERRNRRKKKNQKKLSSGEEKGDDEKLSKSESEESISRKQFHLGVEGHRLAREKRLSAPNQSPLSIRGSLFSARRSSRTSLFSFKGRGKDIGSETEFADDEHSIFGDNESRRGSLFVPQRPQERRSSNLSQASRSPPMLQMNGKMHSAVDCNGVVSLVDGPSALMLPNGQLLPEVIIDKATSDDSGTTQIRKKRRSSSYLLSEDMLNDPHLRQRAMSRASILTNTVEELEESRQKCPSWWYRFAHTFLIWNCSPFWIKFKKFIYIIVMDPFVDLAITICIVLNTLFMAMEHHPMTEEFKNVLVVGNLVFTGIFAAEMVLKLIAMDPYEYFQVGWNVFDSLIVTLSLVELFLADVEGLSVLRSFRLLRVFKLAKSWPTLNMLIKIIGNSVGPLGNLTLVLAIIVFIFAVVGMQLFGKSYKECVCKINDDCSLPRWHMNDFFHSFLIVFRVLCGEWIETMWDCMEVAGQAMCLIVYMMVMVIGNLVVLNLFLALLLSSFSSDNLSAIEEDTDANNLQIAVTRIKKGINYVKQTLRELILKAFSKKPKISKEIRQAEDLNSKKENYISNRTLAEMSKDYNFHKEKDKISGFGSSMDKYLMEESDHQSFIHNPSLTVTVPIAPGESDLENMNTEELSSDSESEYSKERLNRSSSSECSTVDNALPGEGEEAEAEPVNSDEPEACFTDGCVRRFPCCQVSIESGKGKIWWNIRKTCYRIVEHSWFESFIVLMILLSSGALAFEDIYIEKKKTIKIILEYADKIFTYIFILEMLLKWVAYGYKTYFTNAWCWLDFLIVDVSLVTLVANTLGYSDLGPIKSLRTLRALRPLRALSRFEGMRVVVNALIGAIPSIMNVLLVCLIFWLIFSIMGVNLFAGKFYQCVNTTDDSRFPTKQVSNRSECFALMNGSQNVRWKNLKVNFDNVGLRYLSLLQVATFKGWMDIMYAAVDSVNVDQQPSYEHNLYMYIYFVIFIIFGSFFTLNLFIGVIIDNFNQQKKKLGGQDIFMTEEQKKYYNAMKKLGSKKPQKPIPRPGNKFQGCIFDLVTNQAFDITIMILICLNMVTMMVEKEGQSDYMTDVLYWINVVFIILFTGECVLKLISLRHYYFTIGWNIFDFVVVILSIVGMFLAELIETYFVSPTLFRVIRLARIGRILRLIKGAKGIRTLLFALMMSLPALFNIGLLLFLVMFIYAIFGMSNFAYVKKEAGINDMFNFETFGNSMICLFQITTSAGWDGLLAPILNSAPPDCDPKKVHPGSSTEGDCGSPSVGIFYFVSYIIISFLVVVNMYIAVILENFSVATEESTEPLSEDDFEMFYEVWEKFDPDATQFIEYSKLSDFAAALDPPLLIAKPNKVQLIAMDLPMVSGDRIHCLDILFAFTKRVLGESGEMDSLRSQMEERFMSANPSKVSYEPITTTLKRKQEDVSATVIQRAYRRYRLRQNVKNISSIYIKEGDKDDDLPNKGDIVFDNVNSSSPEKTDATASTISPPSYDSVTKPDKEKYEKDKTEKEDKGKDGKETKK</sequence>
<dbReference type="EMBL" id="U35238">
    <property type="protein sequence ID" value="AAA89159.1"/>
    <property type="molecule type" value="mRNA"/>
</dbReference>
<dbReference type="RefSeq" id="NP_001075827.1">
    <molecule id="Q28644-1"/>
    <property type="nucleotide sequence ID" value="NM_001082358.1"/>
</dbReference>
<dbReference type="SMR" id="Q28644"/>
<dbReference type="FunCoup" id="Q28644">
    <property type="interactions" value="75"/>
</dbReference>
<dbReference type="STRING" id="9986.ENSOCUP00000035933"/>
<dbReference type="GlyCosmos" id="Q28644">
    <property type="glycosylation" value="5 sites, No reported glycans"/>
</dbReference>
<dbReference type="PaxDb" id="9986-ENSOCUP00000020201"/>
<dbReference type="GeneID" id="100009210"/>
<dbReference type="KEGG" id="ocu:100009210"/>
<dbReference type="CTD" id="6335"/>
<dbReference type="eggNOG" id="KOG2301">
    <property type="taxonomic scope" value="Eukaryota"/>
</dbReference>
<dbReference type="InParanoid" id="Q28644"/>
<dbReference type="OrthoDB" id="2984333at2759"/>
<dbReference type="Proteomes" id="UP000001811">
    <property type="component" value="Unplaced"/>
</dbReference>
<dbReference type="GO" id="GO:0043679">
    <property type="term" value="C:axon terminus"/>
    <property type="evidence" value="ECO:0000250"/>
    <property type="project" value="UniProtKB"/>
</dbReference>
<dbReference type="GO" id="GO:0005886">
    <property type="term" value="C:plasma membrane"/>
    <property type="evidence" value="ECO:0000250"/>
    <property type="project" value="UniProtKB"/>
</dbReference>
<dbReference type="GO" id="GO:0001518">
    <property type="term" value="C:voltage-gated sodium channel complex"/>
    <property type="evidence" value="ECO:0007669"/>
    <property type="project" value="InterPro"/>
</dbReference>
<dbReference type="GO" id="GO:0005248">
    <property type="term" value="F:voltage-gated sodium channel activity"/>
    <property type="evidence" value="ECO:0000250"/>
    <property type="project" value="UniProtKB"/>
</dbReference>
<dbReference type="GO" id="GO:0098870">
    <property type="term" value="P:action potential propagation"/>
    <property type="evidence" value="ECO:0000250"/>
    <property type="project" value="UniProtKB"/>
</dbReference>
<dbReference type="GO" id="GO:0086010">
    <property type="term" value="P:membrane depolarization during action potential"/>
    <property type="evidence" value="ECO:0007669"/>
    <property type="project" value="TreeGrafter"/>
</dbReference>
<dbReference type="GO" id="GO:0019228">
    <property type="term" value="P:neuronal action potential"/>
    <property type="evidence" value="ECO:0007669"/>
    <property type="project" value="TreeGrafter"/>
</dbReference>
<dbReference type="GO" id="GO:0019233">
    <property type="term" value="P:sensory perception of pain"/>
    <property type="evidence" value="ECO:0000250"/>
    <property type="project" value="UniProtKB"/>
</dbReference>
<dbReference type="CDD" id="cd13433">
    <property type="entry name" value="Na_channel_gate"/>
    <property type="match status" value="1"/>
</dbReference>
<dbReference type="FunFam" id="1.10.238.10:FF:000002">
    <property type="entry name" value="Sodium channel protein"/>
    <property type="match status" value="1"/>
</dbReference>
<dbReference type="FunFam" id="1.10.287.70:FF:000001">
    <property type="entry name" value="Sodium channel protein"/>
    <property type="match status" value="1"/>
</dbReference>
<dbReference type="FunFam" id="1.10.287.70:FF:000006">
    <property type="entry name" value="Sodium channel protein"/>
    <property type="match status" value="1"/>
</dbReference>
<dbReference type="FunFam" id="1.20.120.350:FF:000002">
    <property type="entry name" value="Sodium channel protein"/>
    <property type="match status" value="1"/>
</dbReference>
<dbReference type="FunFam" id="1.20.120.350:FF:000004">
    <property type="entry name" value="Sodium channel protein"/>
    <property type="match status" value="1"/>
</dbReference>
<dbReference type="FunFam" id="1.20.120.350:FF:000005">
    <property type="entry name" value="Sodium channel protein"/>
    <property type="match status" value="1"/>
</dbReference>
<dbReference type="FunFam" id="1.20.5.1190:FF:000001">
    <property type="entry name" value="Sodium channel protein"/>
    <property type="match status" value="1"/>
</dbReference>
<dbReference type="FunFam" id="1.20.120.350:FF:000003">
    <property type="entry name" value="Voltage-dependent sodium channel"/>
    <property type="match status" value="1"/>
</dbReference>
<dbReference type="Gene3D" id="1.10.287.70">
    <property type="match status" value="4"/>
</dbReference>
<dbReference type="Gene3D" id="1.10.238.10">
    <property type="entry name" value="EF-hand"/>
    <property type="match status" value="1"/>
</dbReference>
<dbReference type="Gene3D" id="1.20.5.1190">
    <property type="entry name" value="iswi atpase"/>
    <property type="match status" value="1"/>
</dbReference>
<dbReference type="Gene3D" id="1.20.120.350">
    <property type="entry name" value="Voltage-gated potassium channels. Chain C"/>
    <property type="match status" value="4"/>
</dbReference>
<dbReference type="InterPro" id="IPR005821">
    <property type="entry name" value="Ion_trans_dom"/>
</dbReference>
<dbReference type="InterPro" id="IPR000048">
    <property type="entry name" value="IQ_motif_EF-hand-BS"/>
</dbReference>
<dbReference type="InterPro" id="IPR001696">
    <property type="entry name" value="Na_channel_asu"/>
</dbReference>
<dbReference type="InterPro" id="IPR044564">
    <property type="entry name" value="Na_chnl_inactivation_gate"/>
</dbReference>
<dbReference type="InterPro" id="IPR010526">
    <property type="entry name" value="Na_trans_assoc_dom"/>
</dbReference>
<dbReference type="InterPro" id="IPR024583">
    <property type="entry name" value="Na_trans_cytopl"/>
</dbReference>
<dbReference type="InterPro" id="IPR043203">
    <property type="entry name" value="VGCC_Ca_Na"/>
</dbReference>
<dbReference type="InterPro" id="IPR027359">
    <property type="entry name" value="Volt_channel_dom_sf"/>
</dbReference>
<dbReference type="PANTHER" id="PTHR10037:SF221">
    <property type="entry name" value="SODIUM CHANNEL PROTEIN TYPE 9 SUBUNIT ALPHA"/>
    <property type="match status" value="1"/>
</dbReference>
<dbReference type="PANTHER" id="PTHR10037">
    <property type="entry name" value="VOLTAGE-GATED CATION CHANNEL CALCIUM AND SODIUM"/>
    <property type="match status" value="1"/>
</dbReference>
<dbReference type="Pfam" id="PF00520">
    <property type="entry name" value="Ion_trans"/>
    <property type="match status" value="4"/>
</dbReference>
<dbReference type="Pfam" id="PF24609">
    <property type="entry name" value="IQ_SCN5A_C"/>
    <property type="match status" value="1"/>
</dbReference>
<dbReference type="Pfam" id="PF06512">
    <property type="entry name" value="Na_trans_assoc"/>
    <property type="match status" value="1"/>
</dbReference>
<dbReference type="Pfam" id="PF11933">
    <property type="entry name" value="Na_trans_cytopl"/>
    <property type="match status" value="1"/>
</dbReference>
<dbReference type="PRINTS" id="PR00170">
    <property type="entry name" value="NACHANNEL"/>
</dbReference>
<dbReference type="SMART" id="SM00015">
    <property type="entry name" value="IQ"/>
    <property type="match status" value="1"/>
</dbReference>
<dbReference type="SUPFAM" id="SSF81324">
    <property type="entry name" value="Voltage-gated potassium channels"/>
    <property type="match status" value="4"/>
</dbReference>
<comment type="function">
    <text evidence="4">Pore-forming subunit of Nav1.7, a voltage-gated sodium (Nav) channel that directly mediates the depolarizing phase of action potentials in excitable membranes. Navs, also called VGSCs (voltage-gated sodium channels) or VDSCs (voltage-dependent sodium channels), operate by switching between closed and open conformations depending on the voltage difference across the membrane. In the open conformation they allow Na(+) ions to selectively pass through the pore, along their electrochemical gradient. The influx of Na(+) ions provokes membrane depolarization, initiating the propagation of electrical signals throughout cells and tissues. Nav1.7 plays a crucial role in controlling the excitability and action potential propagation from nociceptor neurons, thereby contributing to the sensory perception of pain.</text>
</comment>
<comment type="catalytic activity">
    <reaction evidence="4">
        <text>Na(+)(in) = Na(+)(out)</text>
        <dbReference type="Rhea" id="RHEA:34963"/>
        <dbReference type="ChEBI" id="CHEBI:29101"/>
    </reaction>
</comment>
<comment type="subunit">
    <text evidence="3 4">The Nav1.7 voltage-gated sodium channel consists of an ion-conducting alpha subunit SCN9A which is functional on its own regulated by one or more beta-1 (SCN1B), beta-2 (SCN2B), beta-3 (SCN3B) and beta-4 (SCN4B) subunits. SCN1B and SCN3B are non-covalently associated with SCN9A. SCN2B and SCN4B are disulfide-linked to SCN9A. SCN1B regulates channel inactivation (By similarity). Interacts with NEDD4 and NEDD4L; regulates Nav1.7 activity most probably through ubiquitination and subsequent endocytosis (By similarity). Interacts with TMEM233; modulates the gating properties of NaV1.7 (By similarity).</text>
</comment>
<comment type="subcellular location">
    <subcellularLocation>
        <location evidence="4">Cell membrane</location>
        <topology evidence="4">Multi-pass membrane protein</topology>
    </subcellularLocation>
    <subcellularLocation>
        <location evidence="4">Cell projection</location>
        <location evidence="4">Neuron projection</location>
    </subcellularLocation>
    <subcellularLocation>
        <location evidence="4">Cell projection</location>
        <location evidence="4">Axon</location>
    </subcellularLocation>
    <text evidence="4">Localizes to neuron terminals. Also detected at Nodes of Ranvier.</text>
</comment>
<comment type="alternative products">
    <event type="alternative splicing"/>
    <isoform>
        <id>Q28644-1</id>
        <name>1</name>
        <sequence type="displayed"/>
    </isoform>
    <isoform>
        <id>Q28644-2</id>
        <name>2</name>
        <sequence type="described" ref="VSP_012030"/>
    </isoform>
</comment>
<comment type="tissue specificity">
    <text evidence="9">Expressed in the sciatic nerve, spinal cord, brainstem, cerebellum and cortex, but not expressed in the lung, skeletal and cardiac muscles, kidney and liver.</text>
</comment>
<comment type="domain">
    <text evidence="11">The sequence contains 4 internal repeats, each with 5 hydrophobic segments (S1, S2, S3, S5, S6) and one positively charged segment (S4). Segments S4 are probably the voltage-sensors and are characterized by a series of positively charged amino acids at every third position.</text>
</comment>
<comment type="PTM">
    <text evidence="4">Phosphorylation at Ser-1487 by PKC in a highly conserved cytoplasmic loop increases peak sodium currents.</text>
</comment>
<comment type="PTM">
    <text evidence="5">Ubiquitinated by NEDD4L; which may promote its endocytosis.</text>
</comment>
<comment type="similarity">
    <text evidence="11">Belongs to the sodium channel (TC 1.A.1.10) family. Nav1.7/SCN9A subfamily.</text>
</comment>